<keyword id="KW-0175">Coiled coil</keyword>
<keyword id="KW-0963">Cytoplasm</keyword>
<keyword id="KW-0343">GTPase activation</keyword>
<keyword id="KW-1185">Reference proteome</keyword>
<keyword id="KW-0677">Repeat</keyword>
<dbReference type="EMBL" id="AAFI02000035">
    <property type="protein sequence ID" value="EAL67273.1"/>
    <property type="molecule type" value="Genomic_DNA"/>
</dbReference>
<dbReference type="RefSeq" id="XP_641238.1">
    <property type="nucleotide sequence ID" value="XM_636146.1"/>
</dbReference>
<dbReference type="SMR" id="Q54VW7"/>
<dbReference type="FunCoup" id="Q54VW7">
    <property type="interactions" value="620"/>
</dbReference>
<dbReference type="STRING" id="44689.Q54VW7"/>
<dbReference type="PaxDb" id="44689-DDB0233849"/>
<dbReference type="EnsemblProtists" id="EAL67273">
    <property type="protein sequence ID" value="EAL67273"/>
    <property type="gene ID" value="DDB_G0280093"/>
</dbReference>
<dbReference type="GeneID" id="8622369"/>
<dbReference type="KEGG" id="ddi:DDB_G0280093"/>
<dbReference type="dictyBase" id="DDB_G0280093">
    <property type="gene designation" value="gacGG"/>
</dbReference>
<dbReference type="VEuPathDB" id="AmoebaDB:DDB_G0280093"/>
<dbReference type="eggNOG" id="KOG1453">
    <property type="taxonomic scope" value="Eukaryota"/>
</dbReference>
<dbReference type="HOGENOM" id="CLU_270576_0_0_1"/>
<dbReference type="InParanoid" id="Q54VW7"/>
<dbReference type="OMA" id="EVFVWGN"/>
<dbReference type="Reactome" id="R-DDI-1169408">
    <property type="pathway name" value="ISG15 antiviral mechanism"/>
</dbReference>
<dbReference type="Reactome" id="R-DDI-936440">
    <property type="pathway name" value="Negative regulators of DDX58/IFIH1 signaling"/>
</dbReference>
<dbReference type="Reactome" id="R-DDI-983168">
    <property type="pathway name" value="Antigen processing: Ubiquitination &amp; Proteasome degradation"/>
</dbReference>
<dbReference type="Reactome" id="R-DDI-9909505">
    <property type="pathway name" value="Modulation of host responses by IFN-stimulated genes"/>
</dbReference>
<dbReference type="PRO" id="PR:Q54VW7"/>
<dbReference type="Proteomes" id="UP000002195">
    <property type="component" value="Chromosome 3"/>
</dbReference>
<dbReference type="GO" id="GO:0005737">
    <property type="term" value="C:cytoplasm"/>
    <property type="evidence" value="ECO:0000318"/>
    <property type="project" value="GO_Central"/>
</dbReference>
<dbReference type="GO" id="GO:0005096">
    <property type="term" value="F:GTPase activator activity"/>
    <property type="evidence" value="ECO:0007669"/>
    <property type="project" value="UniProtKB-KW"/>
</dbReference>
<dbReference type="GO" id="GO:0007165">
    <property type="term" value="P:signal transduction"/>
    <property type="evidence" value="ECO:0007669"/>
    <property type="project" value="InterPro"/>
</dbReference>
<dbReference type="CDD" id="cd00159">
    <property type="entry name" value="RhoGAP"/>
    <property type="match status" value="1"/>
</dbReference>
<dbReference type="Gene3D" id="2.130.10.30">
    <property type="entry name" value="Regulator of chromosome condensation 1/beta-lactamase-inhibitor protein II"/>
    <property type="match status" value="2"/>
</dbReference>
<dbReference type="Gene3D" id="1.10.555.10">
    <property type="entry name" value="Rho GTPase activation protein"/>
    <property type="match status" value="1"/>
</dbReference>
<dbReference type="InterPro" id="IPR009091">
    <property type="entry name" value="RCC1/BLIP-II"/>
</dbReference>
<dbReference type="InterPro" id="IPR000408">
    <property type="entry name" value="Reg_chr_condens"/>
</dbReference>
<dbReference type="InterPro" id="IPR008936">
    <property type="entry name" value="Rho_GTPase_activation_prot"/>
</dbReference>
<dbReference type="InterPro" id="IPR000198">
    <property type="entry name" value="RhoGAP_dom"/>
</dbReference>
<dbReference type="InterPro" id="IPR051210">
    <property type="entry name" value="Ub_ligase/GEF_domain"/>
</dbReference>
<dbReference type="PANTHER" id="PTHR22870">
    <property type="entry name" value="REGULATOR OF CHROMOSOME CONDENSATION"/>
    <property type="match status" value="1"/>
</dbReference>
<dbReference type="PANTHER" id="PTHR22870:SF446">
    <property type="entry name" value="REGULATOR OF CHROMOSOME CONDENSATION DOMAIN-CONTAINING PROTEIN"/>
    <property type="match status" value="1"/>
</dbReference>
<dbReference type="Pfam" id="PF00415">
    <property type="entry name" value="RCC1"/>
    <property type="match status" value="2"/>
</dbReference>
<dbReference type="Pfam" id="PF13540">
    <property type="entry name" value="RCC1_2"/>
    <property type="match status" value="1"/>
</dbReference>
<dbReference type="Pfam" id="PF00620">
    <property type="entry name" value="RhoGAP"/>
    <property type="match status" value="1"/>
</dbReference>
<dbReference type="SMART" id="SM00324">
    <property type="entry name" value="RhoGAP"/>
    <property type="match status" value="1"/>
</dbReference>
<dbReference type="SUPFAM" id="SSF48350">
    <property type="entry name" value="GTPase activation domain, GAP"/>
    <property type="match status" value="1"/>
</dbReference>
<dbReference type="SUPFAM" id="SSF50985">
    <property type="entry name" value="RCC1/BLIP-II"/>
    <property type="match status" value="1"/>
</dbReference>
<dbReference type="PROSITE" id="PS50012">
    <property type="entry name" value="RCC1_3"/>
    <property type="match status" value="2"/>
</dbReference>
<dbReference type="PROSITE" id="PS50238">
    <property type="entry name" value="RHOGAP"/>
    <property type="match status" value="1"/>
</dbReference>
<name>GACGG_DICDI</name>
<feature type="chain" id="PRO_0000380202" description="Rho GTPase-activating protein gacGG">
    <location>
        <begin position="1"/>
        <end position="1203"/>
    </location>
</feature>
<feature type="repeat" description="RCC1 1">
    <location>
        <begin position="52"/>
        <end position="104"/>
    </location>
</feature>
<feature type="repeat" description="RCC1 2">
    <location>
        <begin position="106"/>
        <end position="148"/>
    </location>
</feature>
<feature type="repeat" description="RCC1 3">
    <location>
        <begin position="155"/>
        <end position="204"/>
    </location>
</feature>
<feature type="repeat" description="RCC1 4">
    <location>
        <begin position="206"/>
        <end position="255"/>
    </location>
</feature>
<feature type="repeat" description="RCC1 5">
    <location>
        <begin position="257"/>
        <end position="298"/>
    </location>
</feature>
<feature type="repeat" description="RCC1 6">
    <location>
        <begin position="299"/>
        <end position="359"/>
    </location>
</feature>
<feature type="repeat" description="RCC1 7">
    <location>
        <begin position="361"/>
        <end position="410"/>
    </location>
</feature>
<feature type="domain" description="Rho-GAP" evidence="3">
    <location>
        <begin position="381"/>
        <end position="594"/>
    </location>
</feature>
<feature type="region of interest" description="Disordered" evidence="4">
    <location>
        <begin position="316"/>
        <end position="343"/>
    </location>
</feature>
<feature type="region of interest" description="Disordered" evidence="4">
    <location>
        <begin position="657"/>
        <end position="725"/>
    </location>
</feature>
<feature type="region of interest" description="Disordered" evidence="4">
    <location>
        <begin position="746"/>
        <end position="789"/>
    </location>
</feature>
<feature type="region of interest" description="Disordered" evidence="4">
    <location>
        <begin position="831"/>
        <end position="852"/>
    </location>
</feature>
<feature type="coiled-coil region" evidence="2">
    <location>
        <begin position="649"/>
        <end position="679"/>
    </location>
</feature>
<feature type="coiled-coil region" evidence="2">
    <location>
        <begin position="995"/>
        <end position="1078"/>
    </location>
</feature>
<feature type="compositionally biased region" description="Low complexity" evidence="4">
    <location>
        <begin position="320"/>
        <end position="343"/>
    </location>
</feature>
<feature type="compositionally biased region" description="Low complexity" evidence="4">
    <location>
        <begin position="746"/>
        <end position="788"/>
    </location>
</feature>
<feature type="compositionally biased region" description="Low complexity" evidence="4">
    <location>
        <begin position="833"/>
        <end position="852"/>
    </location>
</feature>
<feature type="site" description="Arginine finger; crucial for GTP hydrolysis by stabilizing the transition state" evidence="3">
    <location>
        <position position="420"/>
    </location>
</feature>
<evidence type="ECO:0000250" key="1"/>
<evidence type="ECO:0000255" key="2"/>
<evidence type="ECO:0000255" key="3">
    <source>
        <dbReference type="PROSITE-ProRule" id="PRU00172"/>
    </source>
</evidence>
<evidence type="ECO:0000256" key="4">
    <source>
        <dbReference type="SAM" id="MobiDB-lite"/>
    </source>
</evidence>
<reference key="1">
    <citation type="journal article" date="2005" name="Nature">
        <title>The genome of the social amoeba Dictyostelium discoideum.</title>
        <authorList>
            <person name="Eichinger L."/>
            <person name="Pachebat J.A."/>
            <person name="Gloeckner G."/>
            <person name="Rajandream M.A."/>
            <person name="Sucgang R."/>
            <person name="Berriman M."/>
            <person name="Song J."/>
            <person name="Olsen R."/>
            <person name="Szafranski K."/>
            <person name="Xu Q."/>
            <person name="Tunggal B."/>
            <person name="Kummerfeld S."/>
            <person name="Madera M."/>
            <person name="Konfortov B.A."/>
            <person name="Rivero F."/>
            <person name="Bankier A.T."/>
            <person name="Lehmann R."/>
            <person name="Hamlin N."/>
            <person name="Davies R."/>
            <person name="Gaudet P."/>
            <person name="Fey P."/>
            <person name="Pilcher K."/>
            <person name="Chen G."/>
            <person name="Saunders D."/>
            <person name="Sodergren E.J."/>
            <person name="Davis P."/>
            <person name="Kerhornou A."/>
            <person name="Nie X."/>
            <person name="Hall N."/>
            <person name="Anjard C."/>
            <person name="Hemphill L."/>
            <person name="Bason N."/>
            <person name="Farbrother P."/>
            <person name="Desany B."/>
            <person name="Just E."/>
            <person name="Morio T."/>
            <person name="Rost R."/>
            <person name="Churcher C.M."/>
            <person name="Cooper J."/>
            <person name="Haydock S."/>
            <person name="van Driessche N."/>
            <person name="Cronin A."/>
            <person name="Goodhead I."/>
            <person name="Muzny D.M."/>
            <person name="Mourier T."/>
            <person name="Pain A."/>
            <person name="Lu M."/>
            <person name="Harper D."/>
            <person name="Lindsay R."/>
            <person name="Hauser H."/>
            <person name="James K.D."/>
            <person name="Quiles M."/>
            <person name="Madan Babu M."/>
            <person name="Saito T."/>
            <person name="Buchrieser C."/>
            <person name="Wardroper A."/>
            <person name="Felder M."/>
            <person name="Thangavelu M."/>
            <person name="Johnson D."/>
            <person name="Knights A."/>
            <person name="Loulseged H."/>
            <person name="Mungall K.L."/>
            <person name="Oliver K."/>
            <person name="Price C."/>
            <person name="Quail M.A."/>
            <person name="Urushihara H."/>
            <person name="Hernandez J."/>
            <person name="Rabbinowitsch E."/>
            <person name="Steffen D."/>
            <person name="Sanders M."/>
            <person name="Ma J."/>
            <person name="Kohara Y."/>
            <person name="Sharp S."/>
            <person name="Simmonds M.N."/>
            <person name="Spiegler S."/>
            <person name="Tivey A."/>
            <person name="Sugano S."/>
            <person name="White B."/>
            <person name="Walker D."/>
            <person name="Woodward J.R."/>
            <person name="Winckler T."/>
            <person name="Tanaka Y."/>
            <person name="Shaulsky G."/>
            <person name="Schleicher M."/>
            <person name="Weinstock G.M."/>
            <person name="Rosenthal A."/>
            <person name="Cox E.C."/>
            <person name="Chisholm R.L."/>
            <person name="Gibbs R.A."/>
            <person name="Loomis W.F."/>
            <person name="Platzer M."/>
            <person name="Kay R.R."/>
            <person name="Williams J.G."/>
            <person name="Dear P.H."/>
            <person name="Noegel A.A."/>
            <person name="Barrell B.G."/>
            <person name="Kuspa A."/>
        </authorList>
    </citation>
    <scope>NUCLEOTIDE SEQUENCE [LARGE SCALE GENOMIC DNA]</scope>
    <source>
        <strain>AX4</strain>
    </source>
</reference>
<proteinExistence type="inferred from homology"/>
<accession>Q54VW7</accession>
<gene>
    <name type="primary">gacGG</name>
    <name type="ORF">DDB_G0280093</name>
</gene>
<organism>
    <name type="scientific">Dictyostelium discoideum</name>
    <name type="common">Social amoeba</name>
    <dbReference type="NCBI Taxonomy" id="44689"/>
    <lineage>
        <taxon>Eukaryota</taxon>
        <taxon>Amoebozoa</taxon>
        <taxon>Evosea</taxon>
        <taxon>Eumycetozoa</taxon>
        <taxon>Dictyostelia</taxon>
        <taxon>Dictyosteliales</taxon>
        <taxon>Dictyosteliaceae</taxon>
        <taxon>Dictyostelium</taxon>
    </lineage>
</organism>
<comment type="function">
    <text evidence="1">Rho GTPase-activating protein involved in the signal transduction pathway.</text>
</comment>
<comment type="subcellular location">
    <subcellularLocation>
        <location evidence="1">Cytoplasm</location>
    </subcellularLocation>
</comment>
<sequence>MTKKSQENISLPQGVLYCWGDKFSGKPTFNPLIPNICFMDNGYNHSLALTETGELYGWGDNRHHQLSSNKAITSIDKPIKIQVIPNQRVKSISCGGNFSAAIMENGLLYVWGTLIEGGKCTESPTKVDLLKGVTCVSIGINHCAVVADSPTTPEKRSVYTWGTNRKGQLGVVGDSITNAPRRVTLGSKAISVCCGEEFTAAIVEGNEVFVWGYNKSRQICSNNSDEIISIPVKPFLGRDIVELSCTKNYIAARSGVGNVCVWGSNEQVCRIGDDKFINFPNKIKQISASTSHILVLSEKGEIFSWGNSEDNQLSHKLDVNSSPNINSSSGTTTPTTNTTTTTKKSTLQFNNVYQLEGRNVLSVYSWGKSSGAIIEPGNFRVDIAESMRRKDNIGSPAPLFFRKLVNYLRGENSKAEGLFRLSGSMARCDDLEKRLDSNEIFPINKYEPYDAADIIKRYLKTLPEPLLTTQLCQKYEKDILNFHNNNINSNSNSSNPNNNNNNNNNNDKIENLILEWIEKLPLENRQLLIYLLSFLQEISYSQIKYQKQNAMGEKNLAIVFAPNILTRGEIGNDEIVEDMIRLLPTIMKQYPLMEDLIIIDQAQQCLRGSRIPYIIDHWIRVTKERETANNSLFKPEIIKTIINSIVECTLEIKNNQNNQNNQKENNNNNNNINNSNNNNTNNTNISPTTLSPSTLSSSQQQQSTPSSLTSSPSPSQRNSLSTGNIANSLSLSSNALFSPNFLSSSKDGNNINNNNNNNNNNNNNNNNNNSSNSSSSSGSSLSSSPNLSPTIVNRSGYSLSFSGGTPSSRDSSVNNLLNTSGGAIQSIQRQFANSGSSSNNNNSNNSPSLIGSNSSPALTFSNSSGNLIETTKLYEKVLALILSPVLPIGSIMKVLPSIFELDTNNDLFIRLLTTIKLVRTVRSNLDEFIQQQLVMIKEINQCSQFIDKAKQLNENVESVITDLLYVDESIKYWKQVQPLIQLYSQQIQSYFKWWFDLLEKSMTETEEKLFRAKKEFDKLETEKTKLEKQLNHLNSVTLETTDEQILLKKQFDQWCLINQIENCSRKIEISNQNLSRVNHDYCSIQSHFEAFKPHLLIVQEFVSIILKSVSLYIEKLDQIKSNTLQMFPQYFNAYIELIFTHHHEIKQQQQLSIIKSLAHSITLQHQLLFIENVNQSKYQISLELETKFNSLKRVILENLKDSR</sequence>
<protein>
    <recommendedName>
        <fullName>Rho GTPase-activating protein gacGG</fullName>
    </recommendedName>
    <alternativeName>
        <fullName>GTPase activating factor for raC protein GG</fullName>
    </alternativeName>
</protein>